<organism>
    <name type="scientific">Agrobacterium fabrum (strain C58 / ATCC 33970)</name>
    <name type="common">Agrobacterium tumefaciens (strain C58)</name>
    <dbReference type="NCBI Taxonomy" id="176299"/>
    <lineage>
        <taxon>Bacteria</taxon>
        <taxon>Pseudomonadati</taxon>
        <taxon>Pseudomonadota</taxon>
        <taxon>Alphaproteobacteria</taxon>
        <taxon>Hyphomicrobiales</taxon>
        <taxon>Rhizobiaceae</taxon>
        <taxon>Rhizobium/Agrobacterium group</taxon>
        <taxon>Agrobacterium</taxon>
        <taxon>Agrobacterium tumefaciens complex</taxon>
    </lineage>
</organism>
<feature type="chain" id="PRO_0000154577" description="Large ribosomal subunit protein uL10">
    <location>
        <begin position="1"/>
        <end position="172"/>
    </location>
</feature>
<protein>
    <recommendedName>
        <fullName evidence="1">Large ribosomal subunit protein uL10</fullName>
    </recommendedName>
    <alternativeName>
        <fullName evidence="3">50S ribosomal protein L10</fullName>
    </alternativeName>
</protein>
<sequence>MERAEKREFVTELNEVFKASGSVVVAHYAGVTVAQMNDFRSKMRAAGGTVKVAKNRLAKIALQGTESEGMTNLFKGQTLIAYSVDPMIAPKVVMDFAKTNDKVVVLGGSMGATTLNAEAVKSLATLPSLDELRAKLLGLLNAPATRVATVVAAPASQLARVFSAYAKKDEAA</sequence>
<reference key="1">
    <citation type="journal article" date="2001" name="Science">
        <title>The genome of the natural genetic engineer Agrobacterium tumefaciens C58.</title>
        <authorList>
            <person name="Wood D.W."/>
            <person name="Setubal J.C."/>
            <person name="Kaul R."/>
            <person name="Monks D.E."/>
            <person name="Kitajima J.P."/>
            <person name="Okura V.K."/>
            <person name="Zhou Y."/>
            <person name="Chen L."/>
            <person name="Wood G.E."/>
            <person name="Almeida N.F. Jr."/>
            <person name="Woo L."/>
            <person name="Chen Y."/>
            <person name="Paulsen I.T."/>
            <person name="Eisen J.A."/>
            <person name="Karp P.D."/>
            <person name="Bovee D. Sr."/>
            <person name="Chapman P."/>
            <person name="Clendenning J."/>
            <person name="Deatherage G."/>
            <person name="Gillet W."/>
            <person name="Grant C."/>
            <person name="Kutyavin T."/>
            <person name="Levy R."/>
            <person name="Li M.-J."/>
            <person name="McClelland E."/>
            <person name="Palmieri A."/>
            <person name="Raymond C."/>
            <person name="Rouse G."/>
            <person name="Saenphimmachak C."/>
            <person name="Wu Z."/>
            <person name="Romero P."/>
            <person name="Gordon D."/>
            <person name="Zhang S."/>
            <person name="Yoo H."/>
            <person name="Tao Y."/>
            <person name="Biddle P."/>
            <person name="Jung M."/>
            <person name="Krespan W."/>
            <person name="Perry M."/>
            <person name="Gordon-Kamm B."/>
            <person name="Liao L."/>
            <person name="Kim S."/>
            <person name="Hendrick C."/>
            <person name="Zhao Z.-Y."/>
            <person name="Dolan M."/>
            <person name="Chumley F."/>
            <person name="Tingey S.V."/>
            <person name="Tomb J.-F."/>
            <person name="Gordon M.P."/>
            <person name="Olson M.V."/>
            <person name="Nester E.W."/>
        </authorList>
    </citation>
    <scope>NUCLEOTIDE SEQUENCE [LARGE SCALE GENOMIC DNA]</scope>
    <source>
        <strain>C58 / ATCC 33970</strain>
    </source>
</reference>
<reference key="2">
    <citation type="journal article" date="2001" name="Science">
        <title>Genome sequence of the plant pathogen and biotechnology agent Agrobacterium tumefaciens C58.</title>
        <authorList>
            <person name="Goodner B."/>
            <person name="Hinkle G."/>
            <person name="Gattung S."/>
            <person name="Miller N."/>
            <person name="Blanchard M."/>
            <person name="Qurollo B."/>
            <person name="Goldman B.S."/>
            <person name="Cao Y."/>
            <person name="Askenazi M."/>
            <person name="Halling C."/>
            <person name="Mullin L."/>
            <person name="Houmiel K."/>
            <person name="Gordon J."/>
            <person name="Vaudin M."/>
            <person name="Iartchouk O."/>
            <person name="Epp A."/>
            <person name="Liu F."/>
            <person name="Wollam C."/>
            <person name="Allinger M."/>
            <person name="Doughty D."/>
            <person name="Scott C."/>
            <person name="Lappas C."/>
            <person name="Markelz B."/>
            <person name="Flanagan C."/>
            <person name="Crowell C."/>
            <person name="Gurson J."/>
            <person name="Lomo C."/>
            <person name="Sear C."/>
            <person name="Strub G."/>
            <person name="Cielo C."/>
            <person name="Slater S."/>
        </authorList>
    </citation>
    <scope>NUCLEOTIDE SEQUENCE [LARGE SCALE GENOMIC DNA]</scope>
    <source>
        <strain>C58 / ATCC 33970</strain>
    </source>
</reference>
<reference key="3">
    <citation type="journal article" date="2009" name="Bull. Exp. Biol. Med.">
        <title>Studying the copy number of ribosomal protein L7/L12.</title>
        <authorList>
            <person name="Grebenyuk E.S."/>
            <person name="Dokrunova A.A."/>
            <person name="Davydov I.I."/>
            <person name="Tonevitsky E.A."/>
            <person name="Tonevitsky A.G."/>
        </authorList>
    </citation>
    <scope>SUBUNIT</scope>
    <scope>STOICHIOMETRY</scope>
</reference>
<keyword id="KW-1185">Reference proteome</keyword>
<keyword id="KW-0687">Ribonucleoprotein</keyword>
<keyword id="KW-0689">Ribosomal protein</keyword>
<keyword id="KW-0694">RNA-binding</keyword>
<keyword id="KW-0699">rRNA-binding</keyword>
<proteinExistence type="evidence at protein level"/>
<name>RL10_AGRFC</name>
<accession>Q8UE06</accession>
<dbReference type="EMBL" id="AE007869">
    <property type="protein sequence ID" value="AAK87718.1"/>
    <property type="molecule type" value="Genomic_DNA"/>
</dbReference>
<dbReference type="PIR" id="AD2817">
    <property type="entry name" value="AD2817"/>
</dbReference>
<dbReference type="PIR" id="E97595">
    <property type="entry name" value="E97595"/>
</dbReference>
<dbReference type="RefSeq" id="NP_354933.1">
    <property type="nucleotide sequence ID" value="NC_003062.2"/>
</dbReference>
<dbReference type="RefSeq" id="WP_003507705.1">
    <property type="nucleotide sequence ID" value="NC_003062.2"/>
</dbReference>
<dbReference type="SMR" id="Q8UE06"/>
<dbReference type="STRING" id="176299.Atu1958"/>
<dbReference type="EnsemblBacteria" id="AAK87718">
    <property type="protein sequence ID" value="AAK87718"/>
    <property type="gene ID" value="Atu1958"/>
</dbReference>
<dbReference type="GeneID" id="1133996"/>
<dbReference type="KEGG" id="atu:Atu1958"/>
<dbReference type="PATRIC" id="fig|176299.10.peg.1971"/>
<dbReference type="eggNOG" id="COG0244">
    <property type="taxonomic scope" value="Bacteria"/>
</dbReference>
<dbReference type="HOGENOM" id="CLU_092227_0_0_5"/>
<dbReference type="OrthoDB" id="9791972at2"/>
<dbReference type="PhylomeDB" id="Q8UE06"/>
<dbReference type="BioCyc" id="AGRO:ATU1958-MONOMER"/>
<dbReference type="Proteomes" id="UP000000813">
    <property type="component" value="Chromosome circular"/>
</dbReference>
<dbReference type="GO" id="GO:0015934">
    <property type="term" value="C:large ribosomal subunit"/>
    <property type="evidence" value="ECO:0007669"/>
    <property type="project" value="InterPro"/>
</dbReference>
<dbReference type="GO" id="GO:0070180">
    <property type="term" value="F:large ribosomal subunit rRNA binding"/>
    <property type="evidence" value="ECO:0007669"/>
    <property type="project" value="UniProtKB-UniRule"/>
</dbReference>
<dbReference type="GO" id="GO:0003735">
    <property type="term" value="F:structural constituent of ribosome"/>
    <property type="evidence" value="ECO:0007669"/>
    <property type="project" value="InterPro"/>
</dbReference>
<dbReference type="GO" id="GO:0006412">
    <property type="term" value="P:translation"/>
    <property type="evidence" value="ECO:0007669"/>
    <property type="project" value="UniProtKB-UniRule"/>
</dbReference>
<dbReference type="CDD" id="cd05797">
    <property type="entry name" value="Ribosomal_L10"/>
    <property type="match status" value="1"/>
</dbReference>
<dbReference type="Gene3D" id="3.30.70.1730">
    <property type="match status" value="1"/>
</dbReference>
<dbReference type="Gene3D" id="6.10.250.290">
    <property type="match status" value="1"/>
</dbReference>
<dbReference type="HAMAP" id="MF_00362">
    <property type="entry name" value="Ribosomal_uL10"/>
    <property type="match status" value="1"/>
</dbReference>
<dbReference type="InterPro" id="IPR001790">
    <property type="entry name" value="Ribosomal_uL10"/>
</dbReference>
<dbReference type="InterPro" id="IPR043141">
    <property type="entry name" value="Ribosomal_uL10-like_sf"/>
</dbReference>
<dbReference type="InterPro" id="IPR022973">
    <property type="entry name" value="Ribosomal_uL10_bac"/>
</dbReference>
<dbReference type="InterPro" id="IPR047865">
    <property type="entry name" value="Ribosomal_uL10_bac_type"/>
</dbReference>
<dbReference type="InterPro" id="IPR002363">
    <property type="entry name" value="Ribosomal_uL10_CS_bac"/>
</dbReference>
<dbReference type="NCBIfam" id="NF000955">
    <property type="entry name" value="PRK00099.1-1"/>
    <property type="match status" value="1"/>
</dbReference>
<dbReference type="PANTHER" id="PTHR11560">
    <property type="entry name" value="39S RIBOSOMAL PROTEIN L10, MITOCHONDRIAL"/>
    <property type="match status" value="1"/>
</dbReference>
<dbReference type="Pfam" id="PF00466">
    <property type="entry name" value="Ribosomal_L10"/>
    <property type="match status" value="1"/>
</dbReference>
<dbReference type="SUPFAM" id="SSF160369">
    <property type="entry name" value="Ribosomal protein L10-like"/>
    <property type="match status" value="1"/>
</dbReference>
<dbReference type="PROSITE" id="PS01109">
    <property type="entry name" value="RIBOSOMAL_L10"/>
    <property type="match status" value="1"/>
</dbReference>
<comment type="function">
    <text evidence="1">Forms part of the ribosomal stalk, playing a central role in the interaction of the ribosome with GTP-bound translation factors.</text>
</comment>
<comment type="subunit">
    <text evidence="2">Part of the ribosomal stalk of the 50S ribosomal subunit. The N-terminus interacts with L11 and the large rRNA to form the base of the stalk. The C-terminus forms an elongated spine to which 3 L12 dimers bind in a sequential fashion forming a heptameric L10(L12)2(L12)2(L12)2 complex.</text>
</comment>
<comment type="similarity">
    <text evidence="1">Belongs to the universal ribosomal protein uL10 family.</text>
</comment>
<evidence type="ECO:0000255" key="1">
    <source>
        <dbReference type="HAMAP-Rule" id="MF_00362"/>
    </source>
</evidence>
<evidence type="ECO:0000269" key="2">
    <source>
    </source>
</evidence>
<evidence type="ECO:0000305" key="3"/>
<gene>
    <name evidence="1" type="primary">rplJ</name>
    <name type="ordered locus">Atu1958</name>
    <name type="ORF">AGR_C_3572</name>
</gene>